<organism>
    <name type="scientific">Mus musculus</name>
    <name type="common">Mouse</name>
    <dbReference type="NCBI Taxonomy" id="10090"/>
    <lineage>
        <taxon>Eukaryota</taxon>
        <taxon>Metazoa</taxon>
        <taxon>Chordata</taxon>
        <taxon>Craniata</taxon>
        <taxon>Vertebrata</taxon>
        <taxon>Euteleostomi</taxon>
        <taxon>Mammalia</taxon>
        <taxon>Eutheria</taxon>
        <taxon>Euarchontoglires</taxon>
        <taxon>Glires</taxon>
        <taxon>Rodentia</taxon>
        <taxon>Myomorpha</taxon>
        <taxon>Muroidea</taxon>
        <taxon>Muridae</taxon>
        <taxon>Murinae</taxon>
        <taxon>Mus</taxon>
        <taxon>Mus</taxon>
    </lineage>
</organism>
<feature type="signal peptide" evidence="2">
    <location>
        <begin position="1"/>
        <end position="25"/>
    </location>
</feature>
<feature type="chain" id="PRO_0000032318" description="Semaphorin-3E">
    <location>
        <begin position="26"/>
        <end position="775"/>
    </location>
</feature>
<feature type="domain" description="Sema" evidence="3">
    <location>
        <begin position="32"/>
        <end position="516"/>
    </location>
</feature>
<feature type="domain" description="Ig-like C2-type">
    <location>
        <begin position="581"/>
        <end position="669"/>
    </location>
</feature>
<feature type="glycosylation site" description="N-linked (GlcNAc...) asparagine" evidence="2">
    <location>
        <position position="44"/>
    </location>
</feature>
<feature type="glycosylation site" description="N-linked (GlcNAc...) asparagine" evidence="2">
    <location>
        <position position="126"/>
    </location>
</feature>
<feature type="glycosylation site" description="N-linked (GlcNAc...) asparagine" evidence="2">
    <location>
        <position position="175"/>
    </location>
</feature>
<feature type="glycosylation site" description="N-linked (GlcNAc...) asparagine" evidence="2">
    <location>
        <position position="330"/>
    </location>
</feature>
<feature type="glycosylation site" description="N-linked (GlcNAc...) asparagine" evidence="2">
    <location>
        <position position="596"/>
    </location>
</feature>
<feature type="disulfide bond" evidence="1">
    <location>
        <begin position="105"/>
        <end position="115"/>
    </location>
</feature>
<feature type="disulfide bond" evidence="1">
    <location>
        <begin position="133"/>
        <end position="142"/>
    </location>
</feature>
<feature type="disulfide bond" evidence="1">
    <location>
        <begin position="270"/>
        <end position="382"/>
    </location>
</feature>
<feature type="disulfide bond" evidence="1">
    <location>
        <begin position="294"/>
        <end position="342"/>
    </location>
</feature>
<feature type="disulfide bond" evidence="1">
    <location>
        <begin position="519"/>
        <end position="537"/>
    </location>
</feature>
<feature type="disulfide bond" evidence="1">
    <location>
        <begin position="654"/>
        <end position="729"/>
    </location>
</feature>
<feature type="sequence conflict" description="In Ref. 1; CAB02590." evidence="8" ref="1">
    <original>MH</original>
    <variation>ID</variation>
    <location>
        <begin position="407"/>
        <end position="408"/>
    </location>
</feature>
<protein>
    <recommendedName>
        <fullName>Semaphorin-3E</fullName>
    </recommendedName>
    <alternativeName>
        <fullName>Semaphorin-H</fullName>
        <shortName>Sema H</shortName>
    </alternativeName>
</protein>
<sequence length="775" mass="89543">MAPAGHILTLLLWGHLLELWTPGHSANPSYPRLRLSHKELLELNRTSIFQSPLGFLDLHTMLLDEYQERLFVGGRDLVYSLNLERVSDGYREIYWPSTAVKVEECIMKGKDANECANYIRVLHHYNRTHLLTCATGAFDPHCAFIRVGHHSEEPLFHLESHRSERGRGRCPFDPNSSFVSTLVGNELFAGLYSDYWGRDSAIFRSMGKLGHIRTEHDDERLLKEPKFVGSYMIPDNEDRDDNKMYFFFTEKALEAENNAHTIYTRVGRLCVNDMGGQRILVNKWSTFLKARLVCSVPGMNGIDTYFDELEDVFLLPTRDPKNPVIFGLFNTTSNIFRGHAVCVYHMSSIREAFNGPYAHKEGPEYHWSLYEGKVPYPRPGSCASKVNGGKYGTTKDYPDDAIRFARMHPLMYQPIKPVHKKPILVKTDGKYNLRQLAVDRVEAEDGQYDVLFIGTDTGIVLKVITIYNQETEWMEEVILEELQIFKDPAPIISMEISSKRQQLYIGSASAVAQVRFHHCDMYGSACADCCLARDPYCAWDGISCSRYYPTGAHAKRRFRRQDVRHGNAAQQCFGQQFVGDALDRTEERLAYGIESNSTLLECTPRSLQAKVIWFVQKGRDVRKEEVKTDDRVVKMDLGLLFLRVRKSDAGTYFCQTVEHNFVHTVRKITLEVVEEHKVEGMFHKDHEEERHHKMPCPPLSGMSQGTKPWYKEFLQLIGYSNFQRVEEYCEKVWCTDKKRKKLKMSPSKWKYANPQEKRLRSKAEHFRLPRHTLLS</sequence>
<name>SEM3E_MOUSE</name>
<reference key="1">
    <citation type="journal article" date="1998" name="Cancer Res.">
        <title>Transcription of a novel mouse semaphorin gene, M-semaH, correlates with the metastatic ability of mouse tumor cell lines.</title>
        <authorList>
            <person name="Christensen C.R.L."/>
            <person name="Klingelhoefer J."/>
            <person name="Tarabykina S."/>
            <person name="Hulgaard E.F."/>
            <person name="Kramerov D."/>
            <person name="Lukanidin E."/>
        </authorList>
    </citation>
    <scope>NUCLEOTIDE SEQUENCE [MRNA]</scope>
    <source>
        <strain>BALB/cJ</strain>
    </source>
</reference>
<reference key="2">
    <citation type="submission" date="1998-04" db="EMBL/GenBank/DDBJ databases">
        <authorList>
            <person name="Christensen C.R.L."/>
        </authorList>
    </citation>
    <scope>SEQUENCE REVISION</scope>
</reference>
<reference key="3">
    <citation type="journal article" date="1999" name="Neuroscience">
        <title>Developmental localization of semaphorin H messenger RNA acting as a collapsing factor on sensory axons in the mouse brain.</title>
        <authorList>
            <person name="Miyazaki N."/>
            <person name="Furuyama T."/>
            <person name="Sakai T."/>
            <person name="Fujioka S."/>
            <person name="Mori T."/>
            <person name="Ohoka Y."/>
            <person name="Takeda N."/>
            <person name="Kubo T."/>
            <person name="Inagaki S."/>
        </authorList>
    </citation>
    <scope>NUCLEOTIDE SEQUENCE [MRNA]</scope>
    <source>
        <strain>C57/Black 6</strain>
    </source>
</reference>
<reference key="4">
    <citation type="submission" date="2005-07" db="EMBL/GenBank/DDBJ databases">
        <authorList>
            <person name="Mural R.J."/>
            <person name="Adams M.D."/>
            <person name="Myers E.W."/>
            <person name="Smith H.O."/>
            <person name="Venter J.C."/>
        </authorList>
    </citation>
    <scope>NUCLEOTIDE SEQUENCE [LARGE SCALE GENOMIC DNA]</scope>
</reference>
<reference key="5">
    <citation type="journal article" date="2004" name="Genome Res.">
        <title>The status, quality, and expansion of the NIH full-length cDNA project: the Mammalian Gene Collection (MGC).</title>
        <authorList>
            <consortium name="The MGC Project Team"/>
        </authorList>
    </citation>
    <scope>NUCLEOTIDE SEQUENCE [LARGE SCALE MRNA]</scope>
    <source>
        <tissue>Eye</tissue>
    </source>
</reference>
<reference key="6">
    <citation type="journal article" date="2005" name="Science">
        <title>Semaphorin 3E and plexin-D1 control vascular pattern independently of neuropilins.</title>
        <authorList>
            <person name="Gu C."/>
            <person name="Yoshida Y."/>
            <person name="Livet J."/>
            <person name="Reimert D.V."/>
            <person name="Mann F."/>
            <person name="Merte J."/>
            <person name="Henderson C.E."/>
            <person name="Jessell T.M."/>
            <person name="Kolodkin A.L."/>
            <person name="Ginty D.D."/>
        </authorList>
    </citation>
    <scope>DISRUPTION PHENOTYPE</scope>
    <scope>FUNCTION</scope>
    <scope>INTERACTION WITH PLXND1</scope>
    <scope>TISSUE SPECIFICITY</scope>
</reference>
<reference key="7">
    <citation type="journal article" date="2009" name="Nature">
        <title>Specificity of sensory-motor connections encoded by Sema3e-Plxnd1 recognition.</title>
        <authorList>
            <person name="Pecho-Vrieseling E."/>
            <person name="Sigrist M."/>
            <person name="Yoshida Y."/>
            <person name="Jessell T.M."/>
            <person name="Arber S."/>
        </authorList>
    </citation>
    <scope>FUNCTION</scope>
</reference>
<reference key="8">
    <citation type="journal article" date="2010" name="Mol. Cell. Biol.">
        <title>Semaphorin 3E initiates antiangiogenic signaling through plexin D1 by regulating Arf6 and R-Ras.</title>
        <authorList>
            <person name="Sakurai A."/>
            <person name="Gavard J."/>
            <person name="Annas-Linhares Y."/>
            <person name="Basile J.R."/>
            <person name="Amornphimoltham P."/>
            <person name="Palmby T.R."/>
            <person name="Yagi H."/>
            <person name="Zhang F."/>
            <person name="Randazzo P.A."/>
            <person name="Li X."/>
            <person name="Weigert R."/>
            <person name="Gutkind J.S."/>
        </authorList>
    </citation>
    <scope>FUNCTION</scope>
    <scope>INTERACTION WITH PLXND1</scope>
</reference>
<reference key="9">
    <citation type="journal article" date="2012" name="Nat. Neurosci.">
        <title>Semaphorin 3E-Plexin-D1 signaling controls pathway-specific synapse formation in the striatum.</title>
        <authorList>
            <person name="Ding J.B."/>
            <person name="Oh W.J."/>
            <person name="Sabatini B.L."/>
            <person name="Gu C."/>
        </authorList>
    </citation>
    <scope>FUNCTION</scope>
    <scope>TISSUE SPECIFICITY</scope>
</reference>
<accession>P70275</accession>
<accession>O09078</accession>
<accession>O09079</accession>
<accession>Q9QX23</accession>
<evidence type="ECO:0000250" key="1"/>
<evidence type="ECO:0000255" key="2"/>
<evidence type="ECO:0000255" key="3">
    <source>
        <dbReference type="PROSITE-ProRule" id="PRU00352"/>
    </source>
</evidence>
<evidence type="ECO:0000269" key="4">
    <source>
    </source>
</evidence>
<evidence type="ECO:0000269" key="5">
    <source>
    </source>
</evidence>
<evidence type="ECO:0000269" key="6">
    <source>
    </source>
</evidence>
<evidence type="ECO:0000269" key="7">
    <source>
    </source>
</evidence>
<evidence type="ECO:0000305" key="8"/>
<comment type="function">
    <text evidence="4 5 6 7">Plays an important role in signaling via the cell surface receptor PLXND1. Mediates reorganization of the actin cytoskeleton, leading to the retraction of cell projections. Promotes focal adhesion disassembly and inhibits adhesion of endothelial cells to the extracellular matrix. Regulates angiogenesis, both during embryogenesis and after birth. Can down-regulate sprouting angiogenesis. Required for normal vascular patterning during embryogenesis. Plays an important role in ensuring the specificity of synapse formation.</text>
</comment>
<comment type="subunit">
    <text evidence="4 6">Interacts with PLXND1.</text>
</comment>
<comment type="interaction">
    <interactant intactId="EBI-8876322">
        <id>P70275</id>
    </interactant>
    <interactant intactId="EBI-310731">
        <id>Q9Y4D7</id>
        <label>PLXND1</label>
    </interactant>
    <organismsDiffer>true</organismsDiffer>
    <experiments>2</experiments>
</comment>
<comment type="subcellular location">
    <subcellularLocation>
        <location>Secreted</location>
    </subcellularLocation>
</comment>
<comment type="tissue specificity">
    <text evidence="4 7">Detected in neurons in the thalamus. Detected in embryonic vasculature. Developing lungs, developing skeletal elements and ventral horns of the developing neural tube. Correlates positively with tumor progression.</text>
</comment>
<comment type="disruption phenotype">
    <text evidence="4">Embryos present defects in the patterning of intersomitic vasculature.</text>
</comment>
<comment type="similarity">
    <text evidence="8">Belongs to the semaphorin family.</text>
</comment>
<gene>
    <name type="primary">Sema3e</name>
    <name type="synonym">Semah</name>
    <name type="synonym">Semh</name>
</gene>
<keyword id="KW-0037">Angiogenesis</keyword>
<keyword id="KW-0217">Developmental protein</keyword>
<keyword id="KW-0221">Differentiation</keyword>
<keyword id="KW-1015">Disulfide bond</keyword>
<keyword id="KW-0325">Glycoprotein</keyword>
<keyword id="KW-0393">Immunoglobulin domain</keyword>
<keyword id="KW-0524">Neurogenesis</keyword>
<keyword id="KW-1185">Reference proteome</keyword>
<keyword id="KW-0964">Secreted</keyword>
<keyword id="KW-0732">Signal</keyword>
<dbReference type="EMBL" id="Z80941">
    <property type="protein sequence ID" value="CAB02590.1"/>
    <property type="molecule type" value="mRNA"/>
</dbReference>
<dbReference type="EMBL" id="Z93947">
    <property type="protein sequence ID" value="CAB07987.1"/>
    <property type="status" value="ALT_SEQ"/>
    <property type="molecule type" value="mRNA"/>
</dbReference>
<dbReference type="EMBL" id="Z93948">
    <property type="protein sequence ID" value="CAB07988.1"/>
    <property type="status" value="ALT_SEQ"/>
    <property type="molecule type" value="mRNA"/>
</dbReference>
<dbReference type="EMBL" id="AF034744">
    <property type="protein sequence ID" value="AAD01996.1"/>
    <property type="molecule type" value="mRNA"/>
</dbReference>
<dbReference type="EMBL" id="CH466635">
    <property type="protein sequence ID" value="EDL38710.1"/>
    <property type="molecule type" value="Genomic_DNA"/>
</dbReference>
<dbReference type="EMBL" id="BC057956">
    <property type="protein sequence ID" value="AAH57956.1"/>
    <property type="molecule type" value="mRNA"/>
</dbReference>
<dbReference type="CCDS" id="CCDS19093.1"/>
<dbReference type="RefSeq" id="NP_035478.2">
    <property type="nucleotide sequence ID" value="NM_011348.2"/>
</dbReference>
<dbReference type="SMR" id="P70275"/>
<dbReference type="BioGRID" id="203164">
    <property type="interactions" value="4"/>
</dbReference>
<dbReference type="CORUM" id="P70275"/>
<dbReference type="FunCoup" id="P70275">
    <property type="interactions" value="518"/>
</dbReference>
<dbReference type="IntAct" id="P70275">
    <property type="interactions" value="1"/>
</dbReference>
<dbReference type="STRING" id="10090.ENSMUSP00000073612"/>
<dbReference type="GlyConnect" id="2694">
    <property type="glycosylation" value="6 N-Linked glycans (2 sites)"/>
</dbReference>
<dbReference type="GlyCosmos" id="P70275">
    <property type="glycosylation" value="5 sites, 6 glycans"/>
</dbReference>
<dbReference type="GlyGen" id="P70275">
    <property type="glycosylation" value="5 sites, 9 N-linked glycans (4 sites)"/>
</dbReference>
<dbReference type="iPTMnet" id="P70275"/>
<dbReference type="PhosphoSitePlus" id="P70275"/>
<dbReference type="PaxDb" id="10090-ENSMUSP00000073612"/>
<dbReference type="PeptideAtlas" id="P70275"/>
<dbReference type="ProteomicsDB" id="256612"/>
<dbReference type="Antibodypedia" id="29599">
    <property type="antibodies" value="284 antibodies from 30 providers"/>
</dbReference>
<dbReference type="DNASU" id="20349"/>
<dbReference type="Ensembl" id="ENSMUST00000073957.8">
    <property type="protein sequence ID" value="ENSMUSP00000073612.7"/>
    <property type="gene ID" value="ENSMUSG00000063531.8"/>
</dbReference>
<dbReference type="GeneID" id="20349"/>
<dbReference type="KEGG" id="mmu:20349"/>
<dbReference type="UCSC" id="uc008wme.1">
    <property type="organism name" value="mouse"/>
</dbReference>
<dbReference type="AGR" id="MGI:1340034"/>
<dbReference type="CTD" id="9723"/>
<dbReference type="MGI" id="MGI:1340034">
    <property type="gene designation" value="Sema3e"/>
</dbReference>
<dbReference type="VEuPathDB" id="HostDB:ENSMUSG00000063531"/>
<dbReference type="eggNOG" id="KOG3611">
    <property type="taxonomic scope" value="Eukaryota"/>
</dbReference>
<dbReference type="GeneTree" id="ENSGT00940000158437"/>
<dbReference type="HOGENOM" id="CLU_009051_5_0_1"/>
<dbReference type="InParanoid" id="P70275"/>
<dbReference type="OMA" id="REGPEYH"/>
<dbReference type="OrthoDB" id="9988752at2759"/>
<dbReference type="PhylomeDB" id="P70275"/>
<dbReference type="TreeFam" id="TF352628"/>
<dbReference type="Reactome" id="R-MMU-416700">
    <property type="pathway name" value="Other semaphorin interactions"/>
</dbReference>
<dbReference type="BioGRID-ORCS" id="20349">
    <property type="hits" value="2 hits in 78 CRISPR screens"/>
</dbReference>
<dbReference type="ChiTaRS" id="Sema3e">
    <property type="organism name" value="mouse"/>
</dbReference>
<dbReference type="PRO" id="PR:P70275"/>
<dbReference type="Proteomes" id="UP000000589">
    <property type="component" value="Chromosome 5"/>
</dbReference>
<dbReference type="RNAct" id="P70275">
    <property type="molecule type" value="protein"/>
</dbReference>
<dbReference type="Bgee" id="ENSMUSG00000063531">
    <property type="expression patterns" value="Expressed in lumbar dorsal root ganglion and 181 other cell types or tissues"/>
</dbReference>
<dbReference type="GO" id="GO:0005576">
    <property type="term" value="C:extracellular region"/>
    <property type="evidence" value="ECO:0000303"/>
    <property type="project" value="UniProtKB"/>
</dbReference>
<dbReference type="GO" id="GO:0005615">
    <property type="term" value="C:extracellular space"/>
    <property type="evidence" value="ECO:0007005"/>
    <property type="project" value="BHF-UCL"/>
</dbReference>
<dbReference type="GO" id="GO:0048018">
    <property type="term" value="F:receptor ligand activity"/>
    <property type="evidence" value="ECO:0007669"/>
    <property type="project" value="Ensembl"/>
</dbReference>
<dbReference type="GO" id="GO:0030215">
    <property type="term" value="F:semaphorin receptor binding"/>
    <property type="evidence" value="ECO:0000353"/>
    <property type="project" value="UniProtKB"/>
</dbReference>
<dbReference type="GO" id="GO:0001569">
    <property type="term" value="P:branching involved in blood vessel morphogenesis"/>
    <property type="evidence" value="ECO:0000315"/>
    <property type="project" value="UniProtKB"/>
</dbReference>
<dbReference type="GO" id="GO:0021828">
    <property type="term" value="P:gonadotrophin-releasing hormone neuronal migration to the hypothalamus"/>
    <property type="evidence" value="ECO:0007669"/>
    <property type="project" value="Ensembl"/>
</dbReference>
<dbReference type="GO" id="GO:0016525">
    <property type="term" value="P:negative regulation of angiogenesis"/>
    <property type="evidence" value="ECO:0000315"/>
    <property type="project" value="UniProtKB"/>
</dbReference>
<dbReference type="GO" id="GO:0001953">
    <property type="term" value="P:negative regulation of cell-matrix adhesion"/>
    <property type="evidence" value="ECO:0000315"/>
    <property type="project" value="UniProtKB"/>
</dbReference>
<dbReference type="GO" id="GO:0043524">
    <property type="term" value="P:negative regulation of neuron apoptotic process"/>
    <property type="evidence" value="ECO:0007669"/>
    <property type="project" value="Ensembl"/>
</dbReference>
<dbReference type="GO" id="GO:0051897">
    <property type="term" value="P:positive regulation of phosphatidylinositol 3-kinase/protein kinase B signal transduction"/>
    <property type="evidence" value="ECO:0007669"/>
    <property type="project" value="Ensembl"/>
</dbReference>
<dbReference type="GO" id="GO:0008360">
    <property type="term" value="P:regulation of cell shape"/>
    <property type="evidence" value="ECO:0000315"/>
    <property type="project" value="UniProtKB"/>
</dbReference>
<dbReference type="GO" id="GO:0071526">
    <property type="term" value="P:semaphorin-plexin signaling pathway"/>
    <property type="evidence" value="ECO:0000315"/>
    <property type="project" value="UniProtKB"/>
</dbReference>
<dbReference type="GO" id="GO:0002040">
    <property type="term" value="P:sprouting angiogenesis"/>
    <property type="evidence" value="ECO:0000315"/>
    <property type="project" value="UniProtKB"/>
</dbReference>
<dbReference type="GO" id="GO:0050808">
    <property type="term" value="P:synapse organization"/>
    <property type="evidence" value="ECO:0000315"/>
    <property type="project" value="UniProtKB"/>
</dbReference>
<dbReference type="CDD" id="cd05871">
    <property type="entry name" value="Ig_Sema3"/>
    <property type="match status" value="1"/>
</dbReference>
<dbReference type="CDD" id="cd11253">
    <property type="entry name" value="Sema_3E"/>
    <property type="match status" value="1"/>
</dbReference>
<dbReference type="FunFam" id="2.130.10.10:FF:000015">
    <property type="entry name" value="Semaphorin 3B"/>
    <property type="match status" value="1"/>
</dbReference>
<dbReference type="FunFam" id="2.60.40.10:FF:000030">
    <property type="entry name" value="Semaphorin 3F like"/>
    <property type="match status" value="1"/>
</dbReference>
<dbReference type="FunFam" id="3.30.1680.10:FF:000001">
    <property type="entry name" value="Semaphorin 3F like"/>
    <property type="match status" value="1"/>
</dbReference>
<dbReference type="Gene3D" id="2.60.40.10">
    <property type="entry name" value="Immunoglobulins"/>
    <property type="match status" value="1"/>
</dbReference>
<dbReference type="Gene3D" id="3.30.1680.10">
    <property type="entry name" value="ligand-binding face of the semaphorins, domain 2"/>
    <property type="match status" value="1"/>
</dbReference>
<dbReference type="Gene3D" id="2.130.10.10">
    <property type="entry name" value="YVTN repeat-like/Quinoprotein amine dehydrogenase"/>
    <property type="match status" value="1"/>
</dbReference>
<dbReference type="InterPro" id="IPR007110">
    <property type="entry name" value="Ig-like_dom"/>
</dbReference>
<dbReference type="InterPro" id="IPR036179">
    <property type="entry name" value="Ig-like_dom_sf"/>
</dbReference>
<dbReference type="InterPro" id="IPR013783">
    <property type="entry name" value="Ig-like_fold"/>
</dbReference>
<dbReference type="InterPro" id="IPR003599">
    <property type="entry name" value="Ig_sub"/>
</dbReference>
<dbReference type="InterPro" id="IPR013151">
    <property type="entry name" value="Immunoglobulin_dom"/>
</dbReference>
<dbReference type="InterPro" id="IPR016201">
    <property type="entry name" value="PSI"/>
</dbReference>
<dbReference type="InterPro" id="IPR001627">
    <property type="entry name" value="Semap_dom"/>
</dbReference>
<dbReference type="InterPro" id="IPR036352">
    <property type="entry name" value="Semap_dom_sf"/>
</dbReference>
<dbReference type="InterPro" id="IPR027231">
    <property type="entry name" value="Semaphorin"/>
</dbReference>
<dbReference type="InterPro" id="IPR015513">
    <property type="entry name" value="Semaphorin_3E_Sema"/>
</dbReference>
<dbReference type="InterPro" id="IPR015943">
    <property type="entry name" value="WD40/YVTN_repeat-like_dom_sf"/>
</dbReference>
<dbReference type="PANTHER" id="PTHR11036">
    <property type="entry name" value="SEMAPHORIN"/>
    <property type="match status" value="1"/>
</dbReference>
<dbReference type="PANTHER" id="PTHR11036:SF22">
    <property type="entry name" value="SEMAPHORIN-3E"/>
    <property type="match status" value="1"/>
</dbReference>
<dbReference type="Pfam" id="PF00047">
    <property type="entry name" value="ig"/>
    <property type="match status" value="1"/>
</dbReference>
<dbReference type="Pfam" id="PF01403">
    <property type="entry name" value="Sema"/>
    <property type="match status" value="1"/>
</dbReference>
<dbReference type="SMART" id="SM00409">
    <property type="entry name" value="IG"/>
    <property type="match status" value="1"/>
</dbReference>
<dbReference type="SMART" id="SM00423">
    <property type="entry name" value="PSI"/>
    <property type="match status" value="1"/>
</dbReference>
<dbReference type="SMART" id="SM00630">
    <property type="entry name" value="Sema"/>
    <property type="match status" value="1"/>
</dbReference>
<dbReference type="SUPFAM" id="SSF48726">
    <property type="entry name" value="Immunoglobulin"/>
    <property type="match status" value="1"/>
</dbReference>
<dbReference type="SUPFAM" id="SSF103575">
    <property type="entry name" value="Plexin repeat"/>
    <property type="match status" value="1"/>
</dbReference>
<dbReference type="SUPFAM" id="SSF101912">
    <property type="entry name" value="Sema domain"/>
    <property type="match status" value="1"/>
</dbReference>
<dbReference type="PROSITE" id="PS50835">
    <property type="entry name" value="IG_LIKE"/>
    <property type="match status" value="1"/>
</dbReference>
<dbReference type="PROSITE" id="PS51004">
    <property type="entry name" value="SEMA"/>
    <property type="match status" value="1"/>
</dbReference>
<proteinExistence type="evidence at protein level"/>